<reference key="1">
    <citation type="submission" date="2007-10" db="EMBL/GenBank/DDBJ databases">
        <title>Complete sequence of Methanococcus maripaludis C6.</title>
        <authorList>
            <consortium name="US DOE Joint Genome Institute"/>
            <person name="Copeland A."/>
            <person name="Lucas S."/>
            <person name="Lapidus A."/>
            <person name="Barry K."/>
            <person name="Glavina del Rio T."/>
            <person name="Dalin E."/>
            <person name="Tice H."/>
            <person name="Pitluck S."/>
            <person name="Clum A."/>
            <person name="Schmutz J."/>
            <person name="Larimer F."/>
            <person name="Land M."/>
            <person name="Hauser L."/>
            <person name="Kyrpides N."/>
            <person name="Mikhailova N."/>
            <person name="Sieprawska-Lupa M."/>
            <person name="Whitman W.B."/>
            <person name="Richardson P."/>
        </authorList>
    </citation>
    <scope>NUCLEOTIDE SEQUENCE [LARGE SCALE GENOMIC DNA]</scope>
    <source>
        <strain>C6 / ATCC BAA-1332</strain>
    </source>
</reference>
<accession>A9A9Z3</accession>
<evidence type="ECO:0000255" key="1">
    <source>
        <dbReference type="HAMAP-Rule" id="MF_01306"/>
    </source>
</evidence>
<evidence type="ECO:0000256" key="2">
    <source>
        <dbReference type="SAM" id="MobiDB-lite"/>
    </source>
</evidence>
<evidence type="ECO:0000305" key="3"/>
<keyword id="KW-0687">Ribonucleoprotein</keyword>
<keyword id="KW-0689">Ribosomal protein</keyword>
<keyword id="KW-0694">RNA-binding</keyword>
<keyword id="KW-0699">rRNA-binding</keyword>
<protein>
    <recommendedName>
        <fullName evidence="1">Small ribosomal subunit protein uS4</fullName>
    </recommendedName>
    <alternativeName>
        <fullName evidence="3">30S ribosomal protein S4</fullName>
    </alternativeName>
</protein>
<comment type="function">
    <text evidence="1">One of the primary rRNA binding proteins, it binds directly to 16S rRNA where it nucleates assembly of the body of the 30S subunit.</text>
</comment>
<comment type="function">
    <text evidence="1">With S5 and S12 plays an important role in translational accuracy.</text>
</comment>
<comment type="subunit">
    <text evidence="1">Part of the 30S ribosomal subunit. Contacts protein S5. The interaction surface between S4 and S5 is involved in control of translational fidelity.</text>
</comment>
<comment type="similarity">
    <text evidence="1">Belongs to the universal ribosomal protein uS4 family.</text>
</comment>
<organism>
    <name type="scientific">Methanococcus maripaludis (strain C6 / ATCC BAA-1332)</name>
    <dbReference type="NCBI Taxonomy" id="444158"/>
    <lineage>
        <taxon>Archaea</taxon>
        <taxon>Methanobacteriati</taxon>
        <taxon>Methanobacteriota</taxon>
        <taxon>Methanomada group</taxon>
        <taxon>Methanococci</taxon>
        <taxon>Methanococcales</taxon>
        <taxon>Methanococcaceae</taxon>
        <taxon>Methanococcus</taxon>
    </lineage>
</organism>
<feature type="chain" id="PRO_1000140757" description="Small ribosomal subunit protein uS4">
    <location>
        <begin position="1"/>
        <end position="178"/>
    </location>
</feature>
<feature type="domain" description="S4 RNA-binding" evidence="1">
    <location>
        <begin position="104"/>
        <end position="166"/>
    </location>
</feature>
<feature type="region of interest" description="Disordered" evidence="2">
    <location>
        <begin position="158"/>
        <end position="178"/>
    </location>
</feature>
<sequence>MGDPRRLGKKYDTPNHPWIGERIQKEREISQKYGLVNKKELWKMETQLRNYRRQARKLISDTTTQGGKEAVQLFNVLKRYAILVEQEPTLDHVLSLDIESILERRLQTIVYRKGLAKTAKQARQFIVHGHIAVNGKRVTAPAYLVSVAENDAIEYVPNSPMASENHPERTAAVSEENQ</sequence>
<dbReference type="EMBL" id="CP000867">
    <property type="protein sequence ID" value="ABX02166.1"/>
    <property type="molecule type" value="Genomic_DNA"/>
</dbReference>
<dbReference type="SMR" id="A9A9Z3"/>
<dbReference type="STRING" id="444158.MmarC6_1353"/>
<dbReference type="KEGG" id="mmx:MmarC6_1353"/>
<dbReference type="eggNOG" id="arCOG04239">
    <property type="taxonomic scope" value="Archaea"/>
</dbReference>
<dbReference type="HOGENOM" id="CLU_089738_1_1_2"/>
<dbReference type="OrthoDB" id="10429at2157"/>
<dbReference type="PhylomeDB" id="A9A9Z3"/>
<dbReference type="GO" id="GO:0015935">
    <property type="term" value="C:small ribosomal subunit"/>
    <property type="evidence" value="ECO:0007669"/>
    <property type="project" value="InterPro"/>
</dbReference>
<dbReference type="GO" id="GO:0019843">
    <property type="term" value="F:rRNA binding"/>
    <property type="evidence" value="ECO:0007669"/>
    <property type="project" value="UniProtKB-UniRule"/>
</dbReference>
<dbReference type="GO" id="GO:0003735">
    <property type="term" value="F:structural constituent of ribosome"/>
    <property type="evidence" value="ECO:0007669"/>
    <property type="project" value="InterPro"/>
</dbReference>
<dbReference type="GO" id="GO:0042274">
    <property type="term" value="P:ribosomal small subunit biogenesis"/>
    <property type="evidence" value="ECO:0007669"/>
    <property type="project" value="TreeGrafter"/>
</dbReference>
<dbReference type="GO" id="GO:0006412">
    <property type="term" value="P:translation"/>
    <property type="evidence" value="ECO:0007669"/>
    <property type="project" value="UniProtKB-UniRule"/>
</dbReference>
<dbReference type="CDD" id="cd00165">
    <property type="entry name" value="S4"/>
    <property type="match status" value="1"/>
</dbReference>
<dbReference type="FunFam" id="3.10.290.10:FF:000026">
    <property type="entry name" value="30S ribosomal protein S4"/>
    <property type="match status" value="1"/>
</dbReference>
<dbReference type="Gene3D" id="3.10.290.10">
    <property type="entry name" value="RNA-binding S4 domain"/>
    <property type="match status" value="1"/>
</dbReference>
<dbReference type="HAMAP" id="MF_01306_A">
    <property type="entry name" value="Ribosomal_uS4_A"/>
    <property type="match status" value="1"/>
</dbReference>
<dbReference type="InterPro" id="IPR022801">
    <property type="entry name" value="Ribosomal_uS4"/>
</dbReference>
<dbReference type="InterPro" id="IPR022802">
    <property type="entry name" value="Ribosomal_uS4_arc"/>
</dbReference>
<dbReference type="InterPro" id="IPR018079">
    <property type="entry name" value="Ribosomal_uS4_CS"/>
</dbReference>
<dbReference type="InterPro" id="IPR005710">
    <property type="entry name" value="Ribosomal_uS4_euk/arc"/>
</dbReference>
<dbReference type="InterPro" id="IPR001912">
    <property type="entry name" value="Ribosomal_uS4_N"/>
</dbReference>
<dbReference type="InterPro" id="IPR002942">
    <property type="entry name" value="S4_RNA-bd"/>
</dbReference>
<dbReference type="InterPro" id="IPR036986">
    <property type="entry name" value="S4_RNA-bd_sf"/>
</dbReference>
<dbReference type="NCBIfam" id="NF003139">
    <property type="entry name" value="PRK04051.1"/>
    <property type="match status" value="1"/>
</dbReference>
<dbReference type="NCBIfam" id="TIGR01018">
    <property type="entry name" value="uS4_arch"/>
    <property type="match status" value="1"/>
</dbReference>
<dbReference type="PANTHER" id="PTHR11831">
    <property type="entry name" value="30S 40S RIBOSOMAL PROTEIN"/>
    <property type="match status" value="1"/>
</dbReference>
<dbReference type="PANTHER" id="PTHR11831:SF5">
    <property type="entry name" value="40S RIBOSOMAL PROTEIN S9"/>
    <property type="match status" value="1"/>
</dbReference>
<dbReference type="Pfam" id="PF01479">
    <property type="entry name" value="S4"/>
    <property type="match status" value="1"/>
</dbReference>
<dbReference type="SMART" id="SM01390">
    <property type="entry name" value="Ribosomal_S4"/>
    <property type="match status" value="1"/>
</dbReference>
<dbReference type="SMART" id="SM00363">
    <property type="entry name" value="S4"/>
    <property type="match status" value="1"/>
</dbReference>
<dbReference type="SUPFAM" id="SSF55174">
    <property type="entry name" value="Alpha-L RNA-binding motif"/>
    <property type="match status" value="1"/>
</dbReference>
<dbReference type="PROSITE" id="PS00632">
    <property type="entry name" value="RIBOSOMAL_S4"/>
    <property type="match status" value="1"/>
</dbReference>
<dbReference type="PROSITE" id="PS50889">
    <property type="entry name" value="S4"/>
    <property type="match status" value="1"/>
</dbReference>
<gene>
    <name evidence="1" type="primary">rps4</name>
    <name type="ordered locus">MmarC6_1353</name>
</gene>
<name>RS4_METM6</name>
<proteinExistence type="inferred from homology"/>